<keyword id="KW-0002">3D-structure</keyword>
<keyword id="KW-0119">Carbohydrate metabolism</keyword>
<keyword id="KW-0378">Hydrolase</keyword>
<keyword id="KW-0460">Magnesium</keyword>
<keyword id="KW-0479">Metal-binding</keyword>
<keyword id="KW-1185">Reference proteome</keyword>
<evidence type="ECO:0000250" key="1"/>
<evidence type="ECO:0000269" key="2">
    <source>
    </source>
</evidence>
<evidence type="ECO:0000269" key="3">
    <source>
    </source>
</evidence>
<evidence type="ECO:0000269" key="4">
    <source>
    </source>
</evidence>
<evidence type="ECO:0000305" key="5"/>
<evidence type="ECO:0007829" key="6">
    <source>
        <dbReference type="PDB" id="2P3N"/>
    </source>
</evidence>
<evidence type="ECO:0007829" key="7">
    <source>
        <dbReference type="PDB" id="2P3V"/>
    </source>
</evidence>
<name>BSUHB_THEMA</name>
<feature type="chain" id="PRO_0000142574" description="Fructose-1,6-bisphosphatase/inositol-1-monophosphatase">
    <location>
        <begin position="1"/>
        <end position="256"/>
    </location>
</feature>
<feature type="binding site" evidence="4">
    <location>
        <position position="65"/>
    </location>
    <ligand>
        <name>Mg(2+)</name>
        <dbReference type="ChEBI" id="CHEBI:18420"/>
        <label>1</label>
    </ligand>
</feature>
<feature type="binding site" evidence="4">
    <location>
        <position position="79"/>
    </location>
    <ligand>
        <name>Mg(2+)</name>
        <dbReference type="ChEBI" id="CHEBI:18420"/>
        <label>1</label>
    </ligand>
</feature>
<feature type="binding site" evidence="1">
    <location>
        <position position="79"/>
    </location>
    <ligand>
        <name>Mg(2+)</name>
        <dbReference type="ChEBI" id="CHEBI:18420"/>
        <label>2</label>
    </ligand>
</feature>
<feature type="binding site" evidence="4">
    <location>
        <position position="81"/>
    </location>
    <ligand>
        <name>Mg(2+)</name>
        <dbReference type="ChEBI" id="CHEBI:18420"/>
        <label>1</label>
    </ligand>
</feature>
<feature type="binding site" evidence="1">
    <location>
        <begin position="82"/>
        <end position="84"/>
    </location>
    <ligand>
        <name>substrate</name>
    </ligand>
</feature>
<feature type="binding site" evidence="1">
    <location>
        <position position="82"/>
    </location>
    <ligand>
        <name>Mg(2+)</name>
        <dbReference type="ChEBI" id="CHEBI:18420"/>
        <label>2</label>
    </ligand>
</feature>
<feature type="binding site" evidence="1">
    <location>
        <position position="172"/>
    </location>
    <ligand>
        <name>substrate</name>
    </ligand>
</feature>
<feature type="binding site" evidence="1">
    <location>
        <position position="177"/>
    </location>
    <ligand>
        <name>substrate</name>
    </ligand>
</feature>
<feature type="binding site" evidence="1">
    <location>
        <position position="196"/>
    </location>
    <ligand>
        <name>substrate</name>
    </ligand>
</feature>
<feature type="binding site" evidence="1">
    <location>
        <position position="201"/>
    </location>
    <ligand>
        <name>Mg(2+)</name>
        <dbReference type="ChEBI" id="CHEBI:18420"/>
        <label>2</label>
    </ligand>
</feature>
<feature type="helix" evidence="6">
    <location>
        <begin position="2"/>
        <end position="21"/>
    </location>
</feature>
<feature type="strand" evidence="6">
    <location>
        <begin position="29"/>
        <end position="38"/>
    </location>
</feature>
<feature type="helix" evidence="6">
    <location>
        <begin position="40"/>
        <end position="56"/>
    </location>
</feature>
<feature type="strand" evidence="6">
    <location>
        <begin position="61"/>
        <end position="67"/>
    </location>
</feature>
<feature type="strand" evidence="6">
    <location>
        <begin position="73"/>
        <end position="82"/>
    </location>
</feature>
<feature type="helix" evidence="6">
    <location>
        <begin position="84"/>
        <end position="89"/>
    </location>
</feature>
<feature type="strand" evidence="6">
    <location>
        <begin position="95"/>
        <end position="102"/>
    </location>
</feature>
<feature type="strand" evidence="6">
    <location>
        <begin position="105"/>
        <end position="113"/>
    </location>
</feature>
<feature type="turn" evidence="6">
    <location>
        <begin position="114"/>
        <end position="117"/>
    </location>
</feature>
<feature type="strand" evidence="6">
    <location>
        <begin position="118"/>
        <end position="123"/>
    </location>
</feature>
<feature type="turn" evidence="6">
    <location>
        <begin position="124"/>
        <end position="126"/>
    </location>
</feature>
<feature type="strand" evidence="6">
    <location>
        <begin position="127"/>
        <end position="130"/>
    </location>
</feature>
<feature type="strand" evidence="7">
    <location>
        <begin position="133"/>
        <end position="135"/>
    </location>
</feature>
<feature type="helix" evidence="6">
    <location>
        <begin position="143"/>
        <end position="145"/>
    </location>
</feature>
<feature type="strand" evidence="6">
    <location>
        <begin position="147"/>
        <end position="150"/>
    </location>
</feature>
<feature type="helix" evidence="6">
    <location>
        <begin position="156"/>
        <end position="164"/>
    </location>
</feature>
<feature type="turn" evidence="6">
    <location>
        <begin position="165"/>
        <end position="167"/>
    </location>
</feature>
<feature type="strand" evidence="6">
    <location>
        <begin position="168"/>
        <end position="173"/>
    </location>
</feature>
<feature type="helix" evidence="6">
    <location>
        <begin position="177"/>
        <end position="185"/>
    </location>
</feature>
<feature type="strand" evidence="6">
    <location>
        <begin position="190"/>
        <end position="196"/>
    </location>
</feature>
<feature type="helix" evidence="6">
    <location>
        <begin position="199"/>
        <end position="211"/>
    </location>
</feature>
<feature type="strand" evidence="6">
    <location>
        <begin position="215"/>
        <end position="217"/>
    </location>
</feature>
<feature type="strand" evidence="6">
    <location>
        <begin position="221"/>
        <end position="223"/>
    </location>
</feature>
<feature type="strand" evidence="6">
    <location>
        <begin position="229"/>
        <end position="234"/>
    </location>
</feature>
<feature type="strand" evidence="6">
    <location>
        <begin position="236"/>
        <end position="238"/>
    </location>
</feature>
<feature type="helix" evidence="6">
    <location>
        <begin position="239"/>
        <end position="253"/>
    </location>
</feature>
<sequence length="256" mass="28647">MDRLDFSIKLLRKVGHLLMIHWGRVDNVEKKTGFKDIVTEIDREAQRMIVDEIRKFFPDENIMAEEGIFEKGDRLWIIDPIDGTINFVHGLPNFSISLAYVENGEVKLGVVHAPALNETLYAEEGSGAFFNGERIRVSENASLEECVGSTGSYVDFTGKFIERMEKRTRRIRILGSAALNAAYVGAGRVDFFVTWRINPWDIAAGLIIVKEAGGMVTDFSGKEANAFSKNFIFSNGLIHDEVVKVVNEVVEEIGGK</sequence>
<gene>
    <name type="primary">suhB</name>
    <name type="ordered locus">TM_1415</name>
</gene>
<protein>
    <recommendedName>
        <fullName>Fructose-1,6-bisphosphatase/inositol-1-monophosphatase</fullName>
        <shortName>FBPase/IMPase</shortName>
        <ecNumber evidence="3">3.1.3.11</ecNumber>
        <ecNumber evidence="2 3">3.1.3.25</ecNumber>
    </recommendedName>
    <alternativeName>
        <fullName>Inositol-1-phosphatase</fullName>
        <shortName>I-1-Pase</shortName>
    </alternativeName>
</protein>
<proteinExistence type="evidence at protein level"/>
<accession>O33832</accession>
<reference key="1">
    <citation type="journal article" date="1998" name="Appl. Microbiol. Biotechnol.">
        <title>Analysis of the gene for beta-fructosidase (invertase, inulinase) of the hyperthermophilic bacterium Thermotoga maritima, and characterisation of the enzyme expressed in Escherichia coli.</title>
        <authorList>
            <person name="Liebl W."/>
            <person name="Brem D."/>
            <person name="Gotschlich A."/>
        </authorList>
    </citation>
    <scope>NUCLEOTIDE SEQUENCE [GENOMIC DNA]</scope>
    <source>
        <strain>ATCC 43589 / DSM 3109 / JCM 10099 / NBRC 100826 / MSB8</strain>
    </source>
</reference>
<reference key="2">
    <citation type="journal article" date="1999" name="Nature">
        <title>Evidence for lateral gene transfer between Archaea and Bacteria from genome sequence of Thermotoga maritima.</title>
        <authorList>
            <person name="Nelson K.E."/>
            <person name="Clayton R.A."/>
            <person name="Gill S.R."/>
            <person name="Gwinn M.L."/>
            <person name="Dodson R.J."/>
            <person name="Haft D.H."/>
            <person name="Hickey E.K."/>
            <person name="Peterson J.D."/>
            <person name="Nelson W.C."/>
            <person name="Ketchum K.A."/>
            <person name="McDonald L.A."/>
            <person name="Utterback T.R."/>
            <person name="Malek J.A."/>
            <person name="Linher K.D."/>
            <person name="Garrett M.M."/>
            <person name="Stewart A.M."/>
            <person name="Cotton M.D."/>
            <person name="Pratt M.S."/>
            <person name="Phillips C.A."/>
            <person name="Richardson D.L."/>
            <person name="Heidelberg J.F."/>
            <person name="Sutton G.G."/>
            <person name="Fleischmann R.D."/>
            <person name="Eisen J.A."/>
            <person name="White O."/>
            <person name="Salzberg S.L."/>
            <person name="Smith H.O."/>
            <person name="Venter J.C."/>
            <person name="Fraser C.M."/>
        </authorList>
    </citation>
    <scope>NUCLEOTIDE SEQUENCE [LARGE SCALE GENOMIC DNA]</scope>
    <source>
        <strain>ATCC 43589 / DSM 3109 / JCM 10099 / NBRC 100826 / MSB8</strain>
    </source>
</reference>
<reference key="3">
    <citation type="journal article" date="1999" name="Appl. Environ. Microbiol.">
        <title>Characterization of a tetrameric inositol monophosphatase from the hyperthermophilic bacterium Thermotoga maritima.</title>
        <authorList>
            <person name="Chen L."/>
            <person name="Roberts M.F."/>
        </authorList>
    </citation>
    <scope>FUNCTION AS IMPASE</scope>
    <scope>CATALYTIC ACTIVITY</scope>
    <scope>SUBSTRATE SPECIFICITY</scope>
    <scope>BIOPHYSICOCHEMICAL PROPERTIES</scope>
    <scope>COFACTOR</scope>
    <scope>SUBUNIT</scope>
</reference>
<reference key="4">
    <citation type="journal article" date="2000" name="Nat. Struct. Biol.">
        <title>MJ0109 is an enzyme that is both an inositol monophosphatase and the 'missing' archaeal fructose-1,6-bisphosphatase.</title>
        <authorList>
            <person name="Stec B."/>
            <person name="Yang H."/>
            <person name="Johnson K.A."/>
            <person name="Chen L."/>
            <person name="Roberts M.F."/>
        </authorList>
    </citation>
    <scope>FUNCTION AS BOTH FBPASE AND IMPASE</scope>
    <scope>CATALYTIC ACTIVITY</scope>
    <scope>KINETIC PARAMETERS</scope>
</reference>
<reference key="5">
    <citation type="journal article" date="2007" name="FEBS J.">
        <title>Crystal structure of the tetrameric inositol 1-phosphate phosphatase (TM1415) from the hyperthermophile, Thermotoga maritima.</title>
        <authorList>
            <person name="Stieglitz K.A."/>
            <person name="Roberts M.F."/>
            <person name="Li W."/>
            <person name="Stec B."/>
        </authorList>
    </citation>
    <scope>X-RAY CRYSTALLOGRAPHY (2.20 ANGSTROMS) IN COMPLEX WITH MAGNESIUM</scope>
</reference>
<comment type="function">
    <text evidence="2 3">Phosphatase with broad specificity; it can dephosphorylate fructose 1,6-bisphosphate, both D and L isomers of inositol-1-phosphate (I-1-P) but displaying a 20-fold higher rate of hydrolysis of D-I-1-P than of the L isomer, 2'-AMP, pNPP, inositol-2-phosphate, beta-glycerol phosphate, and alpha-D-glucose-1-phosphate. Cannot hydrolyze glucose-6-phosphate, fructose-6-phosphate, 5'-AMP and NAD(+). May be involved in the biosynthesis of a unique osmolyte, di-myo-inositol 1,1-phosphate.</text>
</comment>
<comment type="catalytic activity">
    <reaction evidence="3">
        <text>beta-D-fructose 1,6-bisphosphate + H2O = beta-D-fructose 6-phosphate + phosphate</text>
        <dbReference type="Rhea" id="RHEA:11064"/>
        <dbReference type="ChEBI" id="CHEBI:15377"/>
        <dbReference type="ChEBI" id="CHEBI:32966"/>
        <dbReference type="ChEBI" id="CHEBI:43474"/>
        <dbReference type="ChEBI" id="CHEBI:57634"/>
        <dbReference type="EC" id="3.1.3.11"/>
    </reaction>
</comment>
<comment type="catalytic activity">
    <reaction evidence="2 3">
        <text>a myo-inositol phosphate + H2O = myo-inositol + phosphate</text>
        <dbReference type="Rhea" id="RHEA:24056"/>
        <dbReference type="ChEBI" id="CHEBI:15377"/>
        <dbReference type="ChEBI" id="CHEBI:17268"/>
        <dbReference type="ChEBI" id="CHEBI:43474"/>
        <dbReference type="ChEBI" id="CHEBI:84139"/>
        <dbReference type="EC" id="3.1.3.25"/>
    </reaction>
</comment>
<comment type="cofactor">
    <cofactor evidence="2">
        <name>Mg(2+)</name>
        <dbReference type="ChEBI" id="CHEBI:18420"/>
    </cofactor>
</comment>
<comment type="activity regulation">
    <text>In contrast to mammalian I-1-P phosphatases, is only weakly inhibited by Li(+), since 50% inhibitory concentration for Li(+) is about 100 mM, and the Li(+) concentration required to totally abolish I-1-Pase activity is 1 M.</text>
</comment>
<comment type="biophysicochemical properties">
    <kinetics>
        <KM evidence="2 3">0.145 mM for DL-inositol-1-phosphate (at 95 degrees Celsius)</KM>
        <KM evidence="2 3">0.126 mM for D-inositol-1-phosphate (at 95 degrees Celsius)</KM>
        <KM evidence="2 3">0.46 mM for inositol-2-phosphate (at 95 degrees Celsius)</KM>
        <Vmax evidence="2 3">443.0 umol/min/mg enzyme with D-inositol-1-phosphate as substrate (at 95 degrees Celsius)</Vmax>
        <Vmax evidence="2 3">23.0 umol/min/mg enzyme with L-inositol-1-phosphate as substrate (at 95 degrees Celsius)</Vmax>
        <Vmax evidence="2 3">5.8 umol/min/mg enzyme with inositol-2-phosphate as substrate (at 95 degrees Celsius)</Vmax>
        <text evidence="3">kcat is 207 sec(-1) for IMPase activity (at 95 degrees Celsius) and 268 sec(-1) for FBPase activity (at 95 degrees Celsius).</text>
    </kinetics>
    <temperatureDependence>
        <text evidence="2">Thermostable. No loss of IMPase activity after incubation at 85 degrees Celsius for 30 minutes. Heating at 100 degrees Celsius for 10 minutes results in a loss of about 20 to 25% of the activity, and 30 minutes at this temperature inactivate about 70% of the activity.</text>
    </temperatureDependence>
</comment>
<comment type="subunit">
    <text evidence="2 4">Homotetramer.</text>
</comment>
<comment type="similarity">
    <text evidence="5">Belongs to the inositol monophosphatase superfamily. FBPase class 4 family.</text>
</comment>
<comment type="sequence caution" evidence="5">
    <conflict type="frameshift">
        <sequence resource="EMBL-CDS" id="AAD36486"/>
    </conflict>
</comment>
<organism>
    <name type="scientific">Thermotoga maritima (strain ATCC 43589 / DSM 3109 / JCM 10099 / NBRC 100826 / MSB8)</name>
    <dbReference type="NCBI Taxonomy" id="243274"/>
    <lineage>
        <taxon>Bacteria</taxon>
        <taxon>Thermotogati</taxon>
        <taxon>Thermotogota</taxon>
        <taxon>Thermotogae</taxon>
        <taxon>Thermotogales</taxon>
        <taxon>Thermotogaceae</taxon>
        <taxon>Thermotoga</taxon>
    </lineage>
</organism>
<dbReference type="EC" id="3.1.3.11" evidence="3"/>
<dbReference type="EC" id="3.1.3.25" evidence="2 3"/>
<dbReference type="EMBL" id="AJ001073">
    <property type="protein sequence ID" value="CAA04517.1"/>
    <property type="molecule type" value="Genomic_DNA"/>
</dbReference>
<dbReference type="EMBL" id="AE000512">
    <property type="protein sequence ID" value="AAD36486.1"/>
    <property type="status" value="ALT_FRAME"/>
    <property type="molecule type" value="Genomic_DNA"/>
</dbReference>
<dbReference type="PIR" id="E72255">
    <property type="entry name" value="E72255"/>
</dbReference>
<dbReference type="PIR" id="T50642">
    <property type="entry name" value="T50642"/>
</dbReference>
<dbReference type="RefSeq" id="NP_229216.1">
    <property type="nucleotide sequence ID" value="NC_000853.1"/>
</dbReference>
<dbReference type="RefSeq" id="WP_004081652.1">
    <property type="nucleotide sequence ID" value="NZ_CP011107.1"/>
</dbReference>
<dbReference type="PDB" id="2P3N">
    <property type="method" value="X-ray"/>
    <property type="resolution" value="2.20 A"/>
    <property type="chains" value="A/B/C/D=1-256"/>
</dbReference>
<dbReference type="PDB" id="2P3V">
    <property type="method" value="X-ray"/>
    <property type="resolution" value="2.40 A"/>
    <property type="chains" value="A/B/C/D=1-256"/>
</dbReference>
<dbReference type="PDBsum" id="2P3N"/>
<dbReference type="PDBsum" id="2P3V"/>
<dbReference type="SMR" id="O33832"/>
<dbReference type="FunCoup" id="O33832">
    <property type="interactions" value="277"/>
</dbReference>
<dbReference type="STRING" id="243274.TM_1415"/>
<dbReference type="PaxDb" id="243274-THEMA_07245"/>
<dbReference type="EnsemblBacteria" id="AAD36486">
    <property type="protein sequence ID" value="AAD36486"/>
    <property type="gene ID" value="TM_1415"/>
</dbReference>
<dbReference type="KEGG" id="tma:TM1415"/>
<dbReference type="KEGG" id="tmi:THEMA_07245"/>
<dbReference type="KEGG" id="tmm:Tmari_1421"/>
<dbReference type="KEGG" id="tmw:THMA_1444"/>
<dbReference type="PATRIC" id="fig|243274.5.peg.1426"/>
<dbReference type="eggNOG" id="COG0483">
    <property type="taxonomic scope" value="Bacteria"/>
</dbReference>
<dbReference type="InParanoid" id="O33832"/>
<dbReference type="OrthoDB" id="9772456at2"/>
<dbReference type="BioCyc" id="MetaCyc:MONOMER-5063"/>
<dbReference type="BRENDA" id="3.1.3.25">
    <property type="organism ID" value="6331"/>
</dbReference>
<dbReference type="SABIO-RK" id="O33832"/>
<dbReference type="EvolutionaryTrace" id="O33832"/>
<dbReference type="Proteomes" id="UP000008183">
    <property type="component" value="Chromosome"/>
</dbReference>
<dbReference type="GO" id="GO:0042132">
    <property type="term" value="F:fructose 1,6-bisphosphate 1-phosphatase activity"/>
    <property type="evidence" value="ECO:0007669"/>
    <property type="project" value="UniProtKB-EC"/>
</dbReference>
<dbReference type="GO" id="GO:0008934">
    <property type="term" value="F:inositol monophosphate 1-phosphatase activity"/>
    <property type="evidence" value="ECO:0000318"/>
    <property type="project" value="GO_Central"/>
</dbReference>
<dbReference type="GO" id="GO:0046872">
    <property type="term" value="F:metal ion binding"/>
    <property type="evidence" value="ECO:0007669"/>
    <property type="project" value="UniProtKB-KW"/>
</dbReference>
<dbReference type="GO" id="GO:0006020">
    <property type="term" value="P:inositol metabolic process"/>
    <property type="evidence" value="ECO:0000318"/>
    <property type="project" value="GO_Central"/>
</dbReference>
<dbReference type="GO" id="GO:0046854">
    <property type="term" value="P:phosphatidylinositol phosphate biosynthetic process"/>
    <property type="evidence" value="ECO:0007669"/>
    <property type="project" value="InterPro"/>
</dbReference>
<dbReference type="GO" id="GO:0007165">
    <property type="term" value="P:signal transduction"/>
    <property type="evidence" value="ECO:0000318"/>
    <property type="project" value="GO_Central"/>
</dbReference>
<dbReference type="CDD" id="cd01637">
    <property type="entry name" value="IMPase_like"/>
    <property type="match status" value="1"/>
</dbReference>
<dbReference type="FunFam" id="3.30.540.10:FF:000003">
    <property type="entry name" value="Inositol-1-monophosphatase"/>
    <property type="match status" value="1"/>
</dbReference>
<dbReference type="Gene3D" id="3.40.190.80">
    <property type="match status" value="1"/>
</dbReference>
<dbReference type="Gene3D" id="3.30.540.10">
    <property type="entry name" value="Fructose-1,6-Bisphosphatase, subunit A, domain 1"/>
    <property type="match status" value="1"/>
</dbReference>
<dbReference type="InterPro" id="IPR020583">
    <property type="entry name" value="Inositol_monoP_metal-BS"/>
</dbReference>
<dbReference type="InterPro" id="IPR000760">
    <property type="entry name" value="Inositol_monophosphatase-like"/>
</dbReference>
<dbReference type="InterPro" id="IPR020550">
    <property type="entry name" value="Inositol_monophosphatase_CS"/>
</dbReference>
<dbReference type="PANTHER" id="PTHR20854">
    <property type="entry name" value="INOSITOL MONOPHOSPHATASE"/>
    <property type="match status" value="1"/>
</dbReference>
<dbReference type="PANTHER" id="PTHR20854:SF4">
    <property type="entry name" value="INOSITOL-1-MONOPHOSPHATASE-RELATED"/>
    <property type="match status" value="1"/>
</dbReference>
<dbReference type="Pfam" id="PF00459">
    <property type="entry name" value="Inositol_P"/>
    <property type="match status" value="1"/>
</dbReference>
<dbReference type="PRINTS" id="PR00377">
    <property type="entry name" value="IMPHPHTASES"/>
</dbReference>
<dbReference type="SUPFAM" id="SSF56655">
    <property type="entry name" value="Carbohydrate phosphatase"/>
    <property type="match status" value="1"/>
</dbReference>
<dbReference type="PROSITE" id="PS00629">
    <property type="entry name" value="IMP_1"/>
    <property type="match status" value="1"/>
</dbReference>
<dbReference type="PROSITE" id="PS00630">
    <property type="entry name" value="IMP_2"/>
    <property type="match status" value="1"/>
</dbReference>